<name>GRPE_ECO57</name>
<comment type="function">
    <text evidence="1">Participates actively in the response to hyperosmotic and heat shock by preventing the aggregation of stress-denatured proteins, in association with DnaK and GrpE. It is the nucleotide exchange factor for DnaK and may function as a thermosensor. Unfolded proteins bind initially to DnaJ; upon interaction with the DnaJ-bound protein, DnaK hydrolyzes its bound ATP, resulting in the formation of a stable complex. GrpE releases ADP from DnaK; ATP binding to DnaK triggers the release of the substrate protein, thus completing the reaction cycle. Several rounds of ATP-dependent interactions between DnaJ, DnaK and GrpE are required for fully efficient folding.</text>
</comment>
<comment type="subunit">
    <text evidence="1">Homodimer.</text>
</comment>
<comment type="subcellular location">
    <subcellularLocation>
        <location evidence="1">Cytoplasm</location>
    </subcellularLocation>
</comment>
<comment type="similarity">
    <text evidence="1">Belongs to the GrpE family.</text>
</comment>
<dbReference type="EMBL" id="AE005174">
    <property type="protein sequence ID" value="AAG57724.1"/>
    <property type="molecule type" value="Genomic_DNA"/>
</dbReference>
<dbReference type="EMBL" id="BA000007">
    <property type="protein sequence ID" value="BAB36899.1"/>
    <property type="molecule type" value="Genomic_DNA"/>
</dbReference>
<dbReference type="PIR" id="D91063">
    <property type="entry name" value="D91063"/>
</dbReference>
<dbReference type="PIR" id="H85907">
    <property type="entry name" value="H85907"/>
</dbReference>
<dbReference type="RefSeq" id="NP_311503.1">
    <property type="nucleotide sequence ID" value="NC_002695.1"/>
</dbReference>
<dbReference type="RefSeq" id="WP_001296310.1">
    <property type="nucleotide sequence ID" value="NZ_VOAI01000040.1"/>
</dbReference>
<dbReference type="SMR" id="Q7ABI1"/>
<dbReference type="IntAct" id="Q7ABI1">
    <property type="interactions" value="1"/>
</dbReference>
<dbReference type="MINT" id="Q7ABI1"/>
<dbReference type="STRING" id="155864.Z3907"/>
<dbReference type="GeneID" id="914812"/>
<dbReference type="GeneID" id="93774463"/>
<dbReference type="KEGG" id="ece:Z3907"/>
<dbReference type="KEGG" id="ecs:ECs_3476"/>
<dbReference type="PATRIC" id="fig|386585.9.peg.3630"/>
<dbReference type="eggNOG" id="COG0576">
    <property type="taxonomic scope" value="Bacteria"/>
</dbReference>
<dbReference type="HOGENOM" id="CLU_057217_6_0_6"/>
<dbReference type="OMA" id="PHRHQAI"/>
<dbReference type="Proteomes" id="UP000000558">
    <property type="component" value="Chromosome"/>
</dbReference>
<dbReference type="Proteomes" id="UP000002519">
    <property type="component" value="Chromosome"/>
</dbReference>
<dbReference type="GO" id="GO:0005829">
    <property type="term" value="C:cytosol"/>
    <property type="evidence" value="ECO:0007669"/>
    <property type="project" value="TreeGrafter"/>
</dbReference>
<dbReference type="GO" id="GO:0000774">
    <property type="term" value="F:adenyl-nucleotide exchange factor activity"/>
    <property type="evidence" value="ECO:0007669"/>
    <property type="project" value="InterPro"/>
</dbReference>
<dbReference type="GO" id="GO:0042803">
    <property type="term" value="F:protein homodimerization activity"/>
    <property type="evidence" value="ECO:0007669"/>
    <property type="project" value="InterPro"/>
</dbReference>
<dbReference type="GO" id="GO:0051087">
    <property type="term" value="F:protein-folding chaperone binding"/>
    <property type="evidence" value="ECO:0007669"/>
    <property type="project" value="InterPro"/>
</dbReference>
<dbReference type="GO" id="GO:0051082">
    <property type="term" value="F:unfolded protein binding"/>
    <property type="evidence" value="ECO:0007669"/>
    <property type="project" value="TreeGrafter"/>
</dbReference>
<dbReference type="GO" id="GO:0006457">
    <property type="term" value="P:protein folding"/>
    <property type="evidence" value="ECO:0007669"/>
    <property type="project" value="InterPro"/>
</dbReference>
<dbReference type="CDD" id="cd00446">
    <property type="entry name" value="GrpE"/>
    <property type="match status" value="1"/>
</dbReference>
<dbReference type="FunFam" id="2.30.22.10:FF:000001">
    <property type="entry name" value="Protein GrpE"/>
    <property type="match status" value="1"/>
</dbReference>
<dbReference type="FunFam" id="3.90.20.20:FF:000001">
    <property type="entry name" value="Protein GrpE"/>
    <property type="match status" value="1"/>
</dbReference>
<dbReference type="Gene3D" id="3.90.20.20">
    <property type="match status" value="1"/>
</dbReference>
<dbReference type="Gene3D" id="2.30.22.10">
    <property type="entry name" value="Head domain of nucleotide exchange factor GrpE"/>
    <property type="match status" value="1"/>
</dbReference>
<dbReference type="HAMAP" id="MF_01151">
    <property type="entry name" value="GrpE"/>
    <property type="match status" value="1"/>
</dbReference>
<dbReference type="InterPro" id="IPR000740">
    <property type="entry name" value="GrpE"/>
</dbReference>
<dbReference type="InterPro" id="IPR013805">
    <property type="entry name" value="GrpE_coiled_coil"/>
</dbReference>
<dbReference type="InterPro" id="IPR009012">
    <property type="entry name" value="GrpE_head"/>
</dbReference>
<dbReference type="NCBIfam" id="NF007655">
    <property type="entry name" value="PRK10325.1"/>
    <property type="match status" value="1"/>
</dbReference>
<dbReference type="NCBIfam" id="NF010738">
    <property type="entry name" value="PRK14140.1"/>
    <property type="match status" value="1"/>
</dbReference>
<dbReference type="NCBIfam" id="NF010748">
    <property type="entry name" value="PRK14150.1"/>
    <property type="match status" value="1"/>
</dbReference>
<dbReference type="PANTHER" id="PTHR21237">
    <property type="entry name" value="GRPE PROTEIN"/>
    <property type="match status" value="1"/>
</dbReference>
<dbReference type="PANTHER" id="PTHR21237:SF23">
    <property type="entry name" value="GRPE PROTEIN HOMOLOG, MITOCHONDRIAL"/>
    <property type="match status" value="1"/>
</dbReference>
<dbReference type="Pfam" id="PF01025">
    <property type="entry name" value="GrpE"/>
    <property type="match status" value="1"/>
</dbReference>
<dbReference type="PRINTS" id="PR00773">
    <property type="entry name" value="GRPEPROTEIN"/>
</dbReference>
<dbReference type="SUPFAM" id="SSF58014">
    <property type="entry name" value="Coiled-coil domain of nucleotide exchange factor GrpE"/>
    <property type="match status" value="1"/>
</dbReference>
<dbReference type="SUPFAM" id="SSF51064">
    <property type="entry name" value="Head domain of nucleotide exchange factor GrpE"/>
    <property type="match status" value="1"/>
</dbReference>
<dbReference type="PROSITE" id="PS01071">
    <property type="entry name" value="GRPE"/>
    <property type="match status" value="1"/>
</dbReference>
<evidence type="ECO:0000255" key="1">
    <source>
        <dbReference type="HAMAP-Rule" id="MF_01151"/>
    </source>
</evidence>
<evidence type="ECO:0000256" key="2">
    <source>
        <dbReference type="SAM" id="MobiDB-lite"/>
    </source>
</evidence>
<gene>
    <name evidence="1" type="primary">grpE</name>
    <name type="ordered locus">Z3907</name>
    <name type="ordered locus">ECs3476</name>
</gene>
<proteinExistence type="inferred from homology"/>
<feature type="chain" id="PRO_0000113783" description="Protein GrpE">
    <location>
        <begin position="1"/>
        <end position="197"/>
    </location>
</feature>
<feature type="region of interest" description="Disordered" evidence="2">
    <location>
        <begin position="1"/>
        <end position="39"/>
    </location>
</feature>
<accession>Q7ABI1</accession>
<accession>Q8X9C2</accession>
<keyword id="KW-0143">Chaperone</keyword>
<keyword id="KW-0963">Cytoplasm</keyword>
<keyword id="KW-1185">Reference proteome</keyword>
<keyword id="KW-0346">Stress response</keyword>
<sequence>MSSKEQKTPEGQAPEEIIMDQHEEIEAVEPEASAEQVDPRDEKIANLEAQLAEAQTRERDGILRVKAEMENLRRRTELDIEKAHKFALEKFINELLPVIDSLDRALEVADKANPDMSAMVEGIELTLKSMLDVVRKFGVEVIAETNVPLDPNVHQAIAMVESDDVAPGNVLGIMQKGYTLNGRTIRAAMVTVAKAKA</sequence>
<reference key="1">
    <citation type="journal article" date="2001" name="Nature">
        <title>Genome sequence of enterohaemorrhagic Escherichia coli O157:H7.</title>
        <authorList>
            <person name="Perna N.T."/>
            <person name="Plunkett G. III"/>
            <person name="Burland V."/>
            <person name="Mau B."/>
            <person name="Glasner J.D."/>
            <person name="Rose D.J."/>
            <person name="Mayhew G.F."/>
            <person name="Evans P.S."/>
            <person name="Gregor J."/>
            <person name="Kirkpatrick H.A."/>
            <person name="Posfai G."/>
            <person name="Hackett J."/>
            <person name="Klink S."/>
            <person name="Boutin A."/>
            <person name="Shao Y."/>
            <person name="Miller L."/>
            <person name="Grotbeck E.J."/>
            <person name="Davis N.W."/>
            <person name="Lim A."/>
            <person name="Dimalanta E.T."/>
            <person name="Potamousis K."/>
            <person name="Apodaca J."/>
            <person name="Anantharaman T.S."/>
            <person name="Lin J."/>
            <person name="Yen G."/>
            <person name="Schwartz D.C."/>
            <person name="Welch R.A."/>
            <person name="Blattner F.R."/>
        </authorList>
    </citation>
    <scope>NUCLEOTIDE SEQUENCE [LARGE SCALE GENOMIC DNA]</scope>
    <source>
        <strain>O157:H7 / EDL933 / ATCC 700927 / EHEC</strain>
    </source>
</reference>
<reference key="2">
    <citation type="journal article" date="2001" name="DNA Res.">
        <title>Complete genome sequence of enterohemorrhagic Escherichia coli O157:H7 and genomic comparison with a laboratory strain K-12.</title>
        <authorList>
            <person name="Hayashi T."/>
            <person name="Makino K."/>
            <person name="Ohnishi M."/>
            <person name="Kurokawa K."/>
            <person name="Ishii K."/>
            <person name="Yokoyama K."/>
            <person name="Han C.-G."/>
            <person name="Ohtsubo E."/>
            <person name="Nakayama K."/>
            <person name="Murata T."/>
            <person name="Tanaka M."/>
            <person name="Tobe T."/>
            <person name="Iida T."/>
            <person name="Takami H."/>
            <person name="Honda T."/>
            <person name="Sasakawa C."/>
            <person name="Ogasawara N."/>
            <person name="Yasunaga T."/>
            <person name="Kuhara S."/>
            <person name="Shiba T."/>
            <person name="Hattori M."/>
            <person name="Shinagawa H."/>
        </authorList>
    </citation>
    <scope>NUCLEOTIDE SEQUENCE [LARGE SCALE GENOMIC DNA]</scope>
    <source>
        <strain>O157:H7 / Sakai / RIMD 0509952 / EHEC</strain>
    </source>
</reference>
<organism>
    <name type="scientific">Escherichia coli O157:H7</name>
    <dbReference type="NCBI Taxonomy" id="83334"/>
    <lineage>
        <taxon>Bacteria</taxon>
        <taxon>Pseudomonadati</taxon>
        <taxon>Pseudomonadota</taxon>
        <taxon>Gammaproteobacteria</taxon>
        <taxon>Enterobacterales</taxon>
        <taxon>Enterobacteriaceae</taxon>
        <taxon>Escherichia</taxon>
    </lineage>
</organism>
<protein>
    <recommendedName>
        <fullName evidence="1">Protein GrpE</fullName>
    </recommendedName>
    <alternativeName>
        <fullName evidence="1">HSP-70 cofactor</fullName>
    </alternativeName>
</protein>